<accession>A9BNJ1</accession>
<proteinExistence type="inferred from homology"/>
<name>ACPS_DELAS</name>
<dbReference type="EC" id="2.7.8.7" evidence="1"/>
<dbReference type="EMBL" id="CP000884">
    <property type="protein sequence ID" value="ABX37886.1"/>
    <property type="molecule type" value="Genomic_DNA"/>
</dbReference>
<dbReference type="RefSeq" id="WP_012207056.1">
    <property type="nucleotide sequence ID" value="NC_010002.1"/>
</dbReference>
<dbReference type="SMR" id="A9BNJ1"/>
<dbReference type="STRING" id="398578.Daci_5257"/>
<dbReference type="GeneID" id="24113775"/>
<dbReference type="KEGG" id="dac:Daci_5257"/>
<dbReference type="eggNOG" id="COG0736">
    <property type="taxonomic scope" value="Bacteria"/>
</dbReference>
<dbReference type="HOGENOM" id="CLU_089696_3_1_4"/>
<dbReference type="Proteomes" id="UP000000784">
    <property type="component" value="Chromosome"/>
</dbReference>
<dbReference type="GO" id="GO:0005737">
    <property type="term" value="C:cytoplasm"/>
    <property type="evidence" value="ECO:0007669"/>
    <property type="project" value="UniProtKB-SubCell"/>
</dbReference>
<dbReference type="GO" id="GO:0008897">
    <property type="term" value="F:holo-[acyl-carrier-protein] synthase activity"/>
    <property type="evidence" value="ECO:0007669"/>
    <property type="project" value="UniProtKB-UniRule"/>
</dbReference>
<dbReference type="GO" id="GO:0000287">
    <property type="term" value="F:magnesium ion binding"/>
    <property type="evidence" value="ECO:0007669"/>
    <property type="project" value="UniProtKB-UniRule"/>
</dbReference>
<dbReference type="GO" id="GO:0006633">
    <property type="term" value="P:fatty acid biosynthetic process"/>
    <property type="evidence" value="ECO:0007669"/>
    <property type="project" value="UniProtKB-UniRule"/>
</dbReference>
<dbReference type="Gene3D" id="3.90.470.20">
    <property type="entry name" value="4'-phosphopantetheinyl transferase domain"/>
    <property type="match status" value="1"/>
</dbReference>
<dbReference type="HAMAP" id="MF_00101">
    <property type="entry name" value="AcpS"/>
    <property type="match status" value="1"/>
</dbReference>
<dbReference type="InterPro" id="IPR008278">
    <property type="entry name" value="4-PPantetheinyl_Trfase_dom"/>
</dbReference>
<dbReference type="InterPro" id="IPR037143">
    <property type="entry name" value="4-PPantetheinyl_Trfase_dom_sf"/>
</dbReference>
<dbReference type="InterPro" id="IPR002582">
    <property type="entry name" value="ACPS"/>
</dbReference>
<dbReference type="InterPro" id="IPR004568">
    <property type="entry name" value="Ppantetheine-prot_Trfase_dom"/>
</dbReference>
<dbReference type="NCBIfam" id="TIGR00516">
    <property type="entry name" value="acpS"/>
    <property type="match status" value="1"/>
</dbReference>
<dbReference type="NCBIfam" id="TIGR00556">
    <property type="entry name" value="pantethn_trn"/>
    <property type="match status" value="1"/>
</dbReference>
<dbReference type="Pfam" id="PF01648">
    <property type="entry name" value="ACPS"/>
    <property type="match status" value="1"/>
</dbReference>
<dbReference type="SUPFAM" id="SSF56214">
    <property type="entry name" value="4'-phosphopantetheinyl transferase"/>
    <property type="match status" value="1"/>
</dbReference>
<sequence length="131" mass="14898">MIYGIGTDICDVRRIRASLERHGDRFAEKVLAEGELATWRARRARWPERGIRFVATRFSAKEAFSKAIGMGMVMPMTWRSCEVIKLPSGQPAIVLHGALKEWFEARNLQVHLSVTDESDYAASFCVVERRA</sequence>
<keyword id="KW-0963">Cytoplasm</keyword>
<keyword id="KW-0275">Fatty acid biosynthesis</keyword>
<keyword id="KW-0276">Fatty acid metabolism</keyword>
<keyword id="KW-0444">Lipid biosynthesis</keyword>
<keyword id="KW-0443">Lipid metabolism</keyword>
<keyword id="KW-0460">Magnesium</keyword>
<keyword id="KW-0479">Metal-binding</keyword>
<keyword id="KW-1185">Reference proteome</keyword>
<keyword id="KW-0808">Transferase</keyword>
<feature type="chain" id="PRO_1000093873" description="Holo-[acyl-carrier-protein] synthase">
    <location>
        <begin position="1"/>
        <end position="131"/>
    </location>
</feature>
<feature type="binding site" evidence="1">
    <location>
        <position position="8"/>
    </location>
    <ligand>
        <name>Mg(2+)</name>
        <dbReference type="ChEBI" id="CHEBI:18420"/>
    </ligand>
</feature>
<feature type="binding site" evidence="1">
    <location>
        <position position="62"/>
    </location>
    <ligand>
        <name>Mg(2+)</name>
        <dbReference type="ChEBI" id="CHEBI:18420"/>
    </ligand>
</feature>
<comment type="function">
    <text evidence="1">Transfers the 4'-phosphopantetheine moiety from coenzyme A to a Ser of acyl-carrier-protein.</text>
</comment>
<comment type="catalytic activity">
    <reaction evidence="1">
        <text>apo-[ACP] + CoA = holo-[ACP] + adenosine 3',5'-bisphosphate + H(+)</text>
        <dbReference type="Rhea" id="RHEA:12068"/>
        <dbReference type="Rhea" id="RHEA-COMP:9685"/>
        <dbReference type="Rhea" id="RHEA-COMP:9690"/>
        <dbReference type="ChEBI" id="CHEBI:15378"/>
        <dbReference type="ChEBI" id="CHEBI:29999"/>
        <dbReference type="ChEBI" id="CHEBI:57287"/>
        <dbReference type="ChEBI" id="CHEBI:58343"/>
        <dbReference type="ChEBI" id="CHEBI:64479"/>
        <dbReference type="EC" id="2.7.8.7"/>
    </reaction>
</comment>
<comment type="cofactor">
    <cofactor evidence="1">
        <name>Mg(2+)</name>
        <dbReference type="ChEBI" id="CHEBI:18420"/>
    </cofactor>
</comment>
<comment type="subcellular location">
    <subcellularLocation>
        <location evidence="1">Cytoplasm</location>
    </subcellularLocation>
</comment>
<comment type="similarity">
    <text evidence="1">Belongs to the P-Pant transferase superfamily. AcpS family.</text>
</comment>
<organism>
    <name type="scientific">Delftia acidovorans (strain DSM 14801 / SPH-1)</name>
    <dbReference type="NCBI Taxonomy" id="398578"/>
    <lineage>
        <taxon>Bacteria</taxon>
        <taxon>Pseudomonadati</taxon>
        <taxon>Pseudomonadota</taxon>
        <taxon>Betaproteobacteria</taxon>
        <taxon>Burkholderiales</taxon>
        <taxon>Comamonadaceae</taxon>
        <taxon>Delftia</taxon>
    </lineage>
</organism>
<protein>
    <recommendedName>
        <fullName evidence="1">Holo-[acyl-carrier-protein] synthase</fullName>
        <shortName evidence="1">Holo-ACP synthase</shortName>
        <ecNumber evidence="1">2.7.8.7</ecNumber>
    </recommendedName>
    <alternativeName>
        <fullName evidence="1">4'-phosphopantetheinyl transferase AcpS</fullName>
    </alternativeName>
</protein>
<evidence type="ECO:0000255" key="1">
    <source>
        <dbReference type="HAMAP-Rule" id="MF_00101"/>
    </source>
</evidence>
<gene>
    <name evidence="1" type="primary">acpS</name>
    <name type="ordered locus">Daci_5257</name>
</gene>
<reference key="1">
    <citation type="submission" date="2007-11" db="EMBL/GenBank/DDBJ databases">
        <title>Complete sequence of Delftia acidovorans DSM 14801 / SPH-1.</title>
        <authorList>
            <person name="Copeland A."/>
            <person name="Lucas S."/>
            <person name="Lapidus A."/>
            <person name="Barry K."/>
            <person name="Glavina del Rio T."/>
            <person name="Dalin E."/>
            <person name="Tice H."/>
            <person name="Pitluck S."/>
            <person name="Lowry S."/>
            <person name="Clum A."/>
            <person name="Schmutz J."/>
            <person name="Larimer F."/>
            <person name="Land M."/>
            <person name="Hauser L."/>
            <person name="Kyrpides N."/>
            <person name="Kim E."/>
            <person name="Schleheck D."/>
            <person name="Richardson P."/>
        </authorList>
    </citation>
    <scope>NUCLEOTIDE SEQUENCE [LARGE SCALE GENOMIC DNA]</scope>
    <source>
        <strain>DSM 14801 / SPH-1</strain>
    </source>
</reference>